<gene>
    <name evidence="13" type="primary">folC</name>
    <name evidence="13" type="ordered locus">Rv2447c</name>
</gene>
<proteinExistence type="evidence at protein level"/>
<protein>
    <recommendedName>
        <fullName evidence="8">Dihydrofolate synthase/folylpolyglutamate synthase</fullName>
        <shortName>DHFS / FPGS</shortName>
        <ecNumber evidence="5 7">6.3.2.12</ecNumber>
        <ecNumber evidence="1">6.3.2.17</ecNumber>
    </recommendedName>
    <alternativeName>
        <fullName>Folylpoly-gamma-glutamate synthetase</fullName>
    </alternativeName>
    <alternativeName>
        <fullName>Tetrahydrofolylpolyglutamate synthase</fullName>
    </alternativeName>
</protein>
<keyword id="KW-0002">3D-structure</keyword>
<keyword id="KW-0046">Antibiotic resistance</keyword>
<keyword id="KW-0067">ATP-binding</keyword>
<keyword id="KW-0289">Folate biosynthesis</keyword>
<keyword id="KW-0436">Ligase</keyword>
<keyword id="KW-0460">Magnesium</keyword>
<keyword id="KW-0479">Metal-binding</keyword>
<keyword id="KW-0547">Nucleotide-binding</keyword>
<keyword id="KW-1185">Reference proteome</keyword>
<dbReference type="EC" id="6.3.2.12" evidence="5 7"/>
<dbReference type="EC" id="6.3.2.17" evidence="1"/>
<dbReference type="EMBL" id="AL123456">
    <property type="protein sequence ID" value="CCP45240.1"/>
    <property type="molecule type" value="Genomic_DNA"/>
</dbReference>
<dbReference type="RefSeq" id="NP_216963.1">
    <property type="nucleotide sequence ID" value="NC_000962.3"/>
</dbReference>
<dbReference type="RefSeq" id="WP_003899324.1">
    <property type="nucleotide sequence ID" value="NZ_NVQJ01000024.1"/>
</dbReference>
<dbReference type="PDB" id="2VOR">
    <property type="method" value="X-ray"/>
    <property type="resolution" value="2.30 A"/>
    <property type="chains" value="A=1-487"/>
</dbReference>
<dbReference type="PDB" id="2VOS">
    <property type="method" value="X-ray"/>
    <property type="resolution" value="2.00 A"/>
    <property type="chains" value="A=1-487"/>
</dbReference>
<dbReference type="PDBsum" id="2VOR"/>
<dbReference type="PDBsum" id="2VOS"/>
<dbReference type="SMR" id="I6Y0R5"/>
<dbReference type="FunCoup" id="I6Y0R5">
    <property type="interactions" value="538"/>
</dbReference>
<dbReference type="STRING" id="83332.Rv2447c"/>
<dbReference type="PaxDb" id="83332-Rv2447c"/>
<dbReference type="DNASU" id="885902"/>
<dbReference type="GeneID" id="885902"/>
<dbReference type="KEGG" id="mtu:Rv2447c"/>
<dbReference type="KEGG" id="mtv:RVBD_2447c"/>
<dbReference type="PATRIC" id="fig|83332.111.peg.2739"/>
<dbReference type="TubercuList" id="Rv2447c"/>
<dbReference type="eggNOG" id="COG0285">
    <property type="taxonomic scope" value="Bacteria"/>
</dbReference>
<dbReference type="HOGENOM" id="CLU_015869_1_2_11"/>
<dbReference type="InParanoid" id="I6Y0R5"/>
<dbReference type="OrthoDB" id="9809356at2"/>
<dbReference type="PhylomeDB" id="I6Y0R5"/>
<dbReference type="BRENDA" id="6.3.2.12">
    <property type="organism ID" value="3445"/>
</dbReference>
<dbReference type="UniPathway" id="UPA00077">
    <property type="reaction ID" value="UER00157"/>
</dbReference>
<dbReference type="UniPathway" id="UPA00850"/>
<dbReference type="Proteomes" id="UP000001584">
    <property type="component" value="Chromosome"/>
</dbReference>
<dbReference type="GO" id="GO:0005737">
    <property type="term" value="C:cytoplasm"/>
    <property type="evidence" value="ECO:0000318"/>
    <property type="project" value="GO_Central"/>
</dbReference>
<dbReference type="GO" id="GO:0005524">
    <property type="term" value="F:ATP binding"/>
    <property type="evidence" value="ECO:0007669"/>
    <property type="project" value="UniProtKB-KW"/>
</dbReference>
<dbReference type="GO" id="GO:0008841">
    <property type="term" value="F:dihydrofolate synthase activity"/>
    <property type="evidence" value="ECO:0000318"/>
    <property type="project" value="GO_Central"/>
</dbReference>
<dbReference type="GO" id="GO:0046872">
    <property type="term" value="F:metal ion binding"/>
    <property type="evidence" value="ECO:0007669"/>
    <property type="project" value="UniProtKB-KW"/>
</dbReference>
<dbReference type="GO" id="GO:0004326">
    <property type="term" value="F:tetrahydrofolylpolyglutamate synthase activity"/>
    <property type="evidence" value="ECO:0000318"/>
    <property type="project" value="GO_Central"/>
</dbReference>
<dbReference type="GO" id="GO:0046656">
    <property type="term" value="P:folic acid biosynthetic process"/>
    <property type="evidence" value="ECO:0007669"/>
    <property type="project" value="UniProtKB-KW"/>
</dbReference>
<dbReference type="GO" id="GO:0009396">
    <property type="term" value="P:folic acid-containing compound biosynthetic process"/>
    <property type="evidence" value="ECO:0000318"/>
    <property type="project" value="GO_Central"/>
</dbReference>
<dbReference type="GO" id="GO:0046677">
    <property type="term" value="P:response to antibiotic"/>
    <property type="evidence" value="ECO:0007669"/>
    <property type="project" value="UniProtKB-KW"/>
</dbReference>
<dbReference type="GO" id="GO:0046654">
    <property type="term" value="P:tetrahydrofolate biosynthetic process"/>
    <property type="evidence" value="ECO:0007669"/>
    <property type="project" value="UniProtKB-UniPathway"/>
</dbReference>
<dbReference type="FunFam" id="3.40.1190.10:FF:000004">
    <property type="entry name" value="Dihydrofolate synthase/folylpolyglutamate synthase"/>
    <property type="match status" value="1"/>
</dbReference>
<dbReference type="Gene3D" id="3.90.190.20">
    <property type="entry name" value="Mur ligase, C-terminal domain"/>
    <property type="match status" value="1"/>
</dbReference>
<dbReference type="Gene3D" id="3.40.1190.10">
    <property type="entry name" value="Mur-like, catalytic domain"/>
    <property type="match status" value="1"/>
</dbReference>
<dbReference type="InterPro" id="IPR001645">
    <property type="entry name" value="Folylpolyglutamate_synth"/>
</dbReference>
<dbReference type="InterPro" id="IPR018109">
    <property type="entry name" value="Folylpolyglutamate_synth_CS"/>
</dbReference>
<dbReference type="InterPro" id="IPR036565">
    <property type="entry name" value="Mur-like_cat_sf"/>
</dbReference>
<dbReference type="InterPro" id="IPR004101">
    <property type="entry name" value="Mur_ligase_C"/>
</dbReference>
<dbReference type="InterPro" id="IPR036615">
    <property type="entry name" value="Mur_ligase_C_dom_sf"/>
</dbReference>
<dbReference type="InterPro" id="IPR013221">
    <property type="entry name" value="Mur_ligase_cen"/>
</dbReference>
<dbReference type="NCBIfam" id="TIGR01499">
    <property type="entry name" value="folC"/>
    <property type="match status" value="1"/>
</dbReference>
<dbReference type="NCBIfam" id="NF047860">
    <property type="entry name" value="Tet-DihydfolSynFolCMyb"/>
    <property type="match status" value="1"/>
</dbReference>
<dbReference type="PANTHER" id="PTHR11136:SF0">
    <property type="entry name" value="DIHYDROFOLATE SYNTHETASE-RELATED"/>
    <property type="match status" value="1"/>
</dbReference>
<dbReference type="PANTHER" id="PTHR11136">
    <property type="entry name" value="FOLYLPOLYGLUTAMATE SYNTHASE-RELATED"/>
    <property type="match status" value="1"/>
</dbReference>
<dbReference type="Pfam" id="PF02875">
    <property type="entry name" value="Mur_ligase_C"/>
    <property type="match status" value="1"/>
</dbReference>
<dbReference type="Pfam" id="PF08245">
    <property type="entry name" value="Mur_ligase_M"/>
    <property type="match status" value="1"/>
</dbReference>
<dbReference type="SUPFAM" id="SSF53623">
    <property type="entry name" value="MurD-like peptide ligases, catalytic domain"/>
    <property type="match status" value="1"/>
</dbReference>
<dbReference type="SUPFAM" id="SSF53244">
    <property type="entry name" value="MurD-like peptide ligases, peptide-binding domain"/>
    <property type="match status" value="1"/>
</dbReference>
<dbReference type="PROSITE" id="PS01012">
    <property type="entry name" value="FOLYLPOLYGLU_SYNT_2"/>
    <property type="match status" value="1"/>
</dbReference>
<name>FOLC_MYCTU</name>
<comment type="function">
    <text evidence="1 5">Catalyzes the addition of a glutamate residue to dihydropteroate (7,8-dihydropteroate or H2Pte) to form dihydrofolate (7,8-dihydrofolate monoglutamate or H2Pte-Glu) (PubMed:23118010). Also catalyzes successive additions of L-glutamate to tetrahydrofolate, leading to folylpolyglutamate derivatives (By similarity).</text>
</comment>
<comment type="function">
    <text evidence="5 12">Is involved in the bioactivation of the antituberculous drug para-aminosalicylic acid (PAS). Is able to use hydroxy-dihydropteroate (H2PtePAS) as substrate, which is the product formed by the action of DHPS (FolP1) on PAS, leading to hydroxy-dihydrofolate (H2PtePAS-Glu). This compound inhibits dihydrofolate reductase DHFR (DfrA), the next enzyme in the folate pathway, and thus disrupts the folate-dependent metabolic pathways.</text>
</comment>
<comment type="catalytic activity">
    <reaction evidence="5 7">
        <text>7,8-dihydropteroate + L-glutamate + ATP = 7,8-dihydrofolate + ADP + phosphate + H(+)</text>
        <dbReference type="Rhea" id="RHEA:23584"/>
        <dbReference type="ChEBI" id="CHEBI:15378"/>
        <dbReference type="ChEBI" id="CHEBI:17839"/>
        <dbReference type="ChEBI" id="CHEBI:29985"/>
        <dbReference type="ChEBI" id="CHEBI:30616"/>
        <dbReference type="ChEBI" id="CHEBI:43474"/>
        <dbReference type="ChEBI" id="CHEBI:57451"/>
        <dbReference type="ChEBI" id="CHEBI:456216"/>
        <dbReference type="EC" id="6.3.2.12"/>
    </reaction>
</comment>
<comment type="catalytic activity">
    <reaction evidence="1">
        <text>(6S)-5,6,7,8-tetrahydrofolyl-(gamma-L-Glu)(n) + L-glutamate + ATP = (6S)-5,6,7,8-tetrahydrofolyl-(gamma-L-Glu)(n+1) + ADP + phosphate + H(+)</text>
        <dbReference type="Rhea" id="RHEA:10580"/>
        <dbReference type="Rhea" id="RHEA-COMP:14738"/>
        <dbReference type="Rhea" id="RHEA-COMP:14740"/>
        <dbReference type="ChEBI" id="CHEBI:15378"/>
        <dbReference type="ChEBI" id="CHEBI:29985"/>
        <dbReference type="ChEBI" id="CHEBI:30616"/>
        <dbReference type="ChEBI" id="CHEBI:43474"/>
        <dbReference type="ChEBI" id="CHEBI:141005"/>
        <dbReference type="ChEBI" id="CHEBI:456216"/>
        <dbReference type="EC" id="6.3.2.17"/>
    </reaction>
</comment>
<comment type="cofactor">
    <cofactor evidence="1">
        <name>Mg(2+)</name>
        <dbReference type="ChEBI" id="CHEBI:18420"/>
    </cofactor>
    <text evidence="10">Binds 2 Mg(2+) ions per subunit.</text>
</comment>
<comment type="pathway">
    <text evidence="11">Cofactor biosynthesis; tetrahydrofolate biosynthesis; 7,8-dihydrofolate from 2-amino-4-hydroxy-6-hydroxymethyl-7,8-dihydropteridine diphosphate and 4-aminobenzoate: step 2/2.</text>
</comment>
<comment type="pathway">
    <text evidence="1">Cofactor biosynthesis; tetrahydrofolylpolyglutamate biosynthesis.</text>
</comment>
<comment type="subunit">
    <text evidence="3">Monomer.</text>
</comment>
<comment type="domain">
    <text evidence="4">Is folded into two distinct domains, an N-terminal ATPase domain and a C-terminal Rossmann-fold domain, which are joined by a flexible linker.</text>
</comment>
<comment type="disruption phenotype">
    <text evidence="2">Cells lacking this gene display impaired growth.</text>
</comment>
<comment type="miscellaneous">
    <text evidence="6 7">Mutations within this gene in the H2Pte binding pocket are responsible for PAS resistance in M.tuberculosis clinical isolates and laboratory strains. FolC-linked PAS resistance is mediated by altered substrate specificity that results in the failure to generate levels of H2PtePAS-Glu that are necessary to inhibit DHFR (DfrA); therefore, a blockage of PAS bioactivation causes PAS resistance.</text>
</comment>
<comment type="similarity">
    <text evidence="9">Belongs to the folylpolyglutamate synthase family.</text>
</comment>
<reference key="1">
    <citation type="journal article" date="1998" name="Nature">
        <title>Deciphering the biology of Mycobacterium tuberculosis from the complete genome sequence.</title>
        <authorList>
            <person name="Cole S.T."/>
            <person name="Brosch R."/>
            <person name="Parkhill J."/>
            <person name="Garnier T."/>
            <person name="Churcher C.M."/>
            <person name="Harris D.E."/>
            <person name="Gordon S.V."/>
            <person name="Eiglmeier K."/>
            <person name="Gas S."/>
            <person name="Barry C.E. III"/>
            <person name="Tekaia F."/>
            <person name="Badcock K."/>
            <person name="Basham D."/>
            <person name="Brown D."/>
            <person name="Chillingworth T."/>
            <person name="Connor R."/>
            <person name="Davies R.M."/>
            <person name="Devlin K."/>
            <person name="Feltwell T."/>
            <person name="Gentles S."/>
            <person name="Hamlin N."/>
            <person name="Holroyd S."/>
            <person name="Hornsby T."/>
            <person name="Jagels K."/>
            <person name="Krogh A."/>
            <person name="McLean J."/>
            <person name="Moule S."/>
            <person name="Murphy L.D."/>
            <person name="Oliver S."/>
            <person name="Osborne J."/>
            <person name="Quail M.A."/>
            <person name="Rajandream M.A."/>
            <person name="Rogers J."/>
            <person name="Rutter S."/>
            <person name="Seeger K."/>
            <person name="Skelton S."/>
            <person name="Squares S."/>
            <person name="Squares R."/>
            <person name="Sulston J.E."/>
            <person name="Taylor K."/>
            <person name="Whitehead S."/>
            <person name="Barrell B.G."/>
        </authorList>
    </citation>
    <scope>NUCLEOTIDE SEQUENCE [LARGE SCALE GENOMIC DNA]</scope>
    <source>
        <strain>ATCC 25618 / H37Rv</strain>
    </source>
</reference>
<reference key="2">
    <citation type="submission" date="2012-12" db="EMBL/GenBank/DDBJ databases">
        <authorList>
            <person name="Lew J.M."/>
        </authorList>
    </citation>
    <scope>IDENTIFICATION</scope>
    <scope>GENOME REANNOTATION</scope>
    <source>
        <strain>ATCC 25618 / H37Rv</strain>
    </source>
</reference>
<reference key="3">
    <citation type="journal article" date="2003" name="Mol. Microbiol.">
        <title>Genes required for mycobacterial growth defined by high density mutagenesis.</title>
        <authorList>
            <person name="Sassetti C.M."/>
            <person name="Boyd D.H."/>
            <person name="Rubin E.J."/>
        </authorList>
    </citation>
    <scope>DISRUPTION PHENOTYPE</scope>
    <source>
        <strain>H37Rv</strain>
    </source>
</reference>
<reference key="4">
    <citation type="journal article" date="2006" name="Acta Crystallogr. F">
        <title>Purification, crystallization and preliminary X-ray analysis of Mycobacterium tuberculosis folylpolyglutamate synthase (MtbFPGS).</title>
        <authorList>
            <person name="Young P.G."/>
            <person name="Smith C.A."/>
            <person name="Sun X."/>
            <person name="Baker E.N."/>
            <person name="Metcalf P."/>
        </authorList>
    </citation>
    <scope>CRYSTALLIZATION</scope>
    <scope>SUBUNIT</scope>
</reference>
<reference key="5">
    <citation type="journal article" date="2011" name="Mol. Cell. Proteomics">
        <title>Proteogenomic analysis of Mycobacterium tuberculosis by high resolution mass spectrometry.</title>
        <authorList>
            <person name="Kelkar D.S."/>
            <person name="Kumar D."/>
            <person name="Kumar P."/>
            <person name="Balakrishnan L."/>
            <person name="Muthusamy B."/>
            <person name="Yadav A.K."/>
            <person name="Shrivastava P."/>
            <person name="Marimuthu A."/>
            <person name="Anand S."/>
            <person name="Sundaram H."/>
            <person name="Kingsbury R."/>
            <person name="Harsha H.C."/>
            <person name="Nair B."/>
            <person name="Prasad T.S."/>
            <person name="Chauhan D.S."/>
            <person name="Katoch K."/>
            <person name="Katoch V.M."/>
            <person name="Kumar P."/>
            <person name="Chaerkady R."/>
            <person name="Ramachandran S."/>
            <person name="Dash D."/>
            <person name="Pandey A."/>
        </authorList>
    </citation>
    <scope>IDENTIFICATION BY MASS SPECTROMETRY [LARGE SCALE ANALYSIS]</scope>
    <source>
        <strain>ATCC 25618 / H37Rv</strain>
    </source>
</reference>
<reference key="6">
    <citation type="journal article" date="2013" name="J. Biol. Chem.">
        <title>para-Aminosalicylic acid is a prodrug targeting dihydrofolate reductase in Mycobacterium tuberculosis.</title>
        <authorList>
            <person name="Zheng J."/>
            <person name="Rubin E.J."/>
            <person name="Bifani P."/>
            <person name="Mathys V."/>
            <person name="Lim V."/>
            <person name="Au M."/>
            <person name="Jang J."/>
            <person name="Nam J."/>
            <person name="Dick T."/>
            <person name="Walker J.R."/>
            <person name="Pethe K."/>
            <person name="Camacho L.R."/>
        </authorList>
    </citation>
    <scope>FUNCTION</scope>
    <scope>DRUG RESISTANCE</scope>
    <scope>PAS-RESISTANT VARIANT ALA-40</scope>
    <source>
        <strain>H37Rv</strain>
    </source>
</reference>
<reference key="7">
    <citation type="journal article" date="2013" name="Science">
        <title>Para-aminosalicylic acid acts as an alternative substrate of folate metabolism in Mycobacterium tuberculosis.</title>
        <authorList>
            <person name="Chakraborty S."/>
            <person name="Gruber T."/>
            <person name="Barry C.E. III"/>
            <person name="Boshoff H.I."/>
            <person name="Rhee K.Y."/>
        </authorList>
    </citation>
    <scope>FUNCTION</scope>
    <scope>CATALYTIC ACTIVITY</scope>
    <source>
        <strain>H37Rv</strain>
    </source>
</reference>
<reference key="8">
    <citation type="journal article" date="2014" name="Antimicrob. Agents Chemother.">
        <title>Binding pocket alterations in dihydrofolate synthase confer resistance to para-aminosalicylic acid in clinical isolates of Mycobacterium tuberculosis.</title>
        <authorList>
            <person name="Zhao F."/>
            <person name="Wang X.D."/>
            <person name="Erber L.N."/>
            <person name="Luo M."/>
            <person name="Guo A.Z."/>
            <person name="Yang S.S."/>
            <person name="Gu J."/>
            <person name="Turman B.J."/>
            <person name="Gao Y.R."/>
            <person name="Li D.F."/>
            <person name="Cui Z.Q."/>
            <person name="Zhang Z.P."/>
            <person name="Bi L.J."/>
            <person name="Baughn A.D."/>
            <person name="Zhang X.E."/>
            <person name="Deng J.Y."/>
        </authorList>
    </citation>
    <scope>CATALYTIC ACTIVITY</scope>
    <scope>DRUG RESISTANCE</scope>
    <scope>PAS-RESISTANT VARIANTS GLY-40; ALA-43; THR-43; SER-73; GLY-150; SER-152; ALA-153 AND GLY-153</scope>
    <source>
        <strain>ATCC 25177 / H37Ra</strain>
    </source>
</reference>
<reference key="9">
    <citation type="journal article" date="2008" name="Acta Crystallogr. D">
        <title>Structures of Mycobacterium tuberculosis folylpolyglutamate synthase complexed with ADP and AMPPCP.</title>
        <authorList>
            <person name="Young P.G."/>
            <person name="Smith C.A."/>
            <person name="Metcalf P."/>
            <person name="Baker E.N."/>
        </authorList>
    </citation>
    <scope>X-RAY CRYSTALLOGRAPHY (2.00 ANGSTROMS) IN COMPLEXES WITH COBALT IONS; ADP AND ATP ANALOG</scope>
    <scope>FUNCTION</scope>
    <scope>DOMAIN</scope>
</reference>
<organism>
    <name type="scientific">Mycobacterium tuberculosis (strain ATCC 25618 / H37Rv)</name>
    <dbReference type="NCBI Taxonomy" id="83332"/>
    <lineage>
        <taxon>Bacteria</taxon>
        <taxon>Bacillati</taxon>
        <taxon>Actinomycetota</taxon>
        <taxon>Actinomycetes</taxon>
        <taxon>Mycobacteriales</taxon>
        <taxon>Mycobacteriaceae</taxon>
        <taxon>Mycobacterium</taxon>
        <taxon>Mycobacterium tuberculosis complex</taxon>
    </lineage>
</organism>
<sequence length="487" mass="50779">MNSTNSGPPDSGSATGVVPTPDEIASLLQVEHLLDQRWPETRIDPSLTRISALMDLLGSPQRSYPSIHIAGTNGKTSVARMVDALVTALHRRTGRTTSPHLQSPVERISIDGKPISPAQYVATYREIEPLVALIDQQSQASAGKGGPAMSKFEVLTAMAFAAFADAPVDVAVVEVGMGGRWDATNVINAPVAVITPISIDHVDYLGADIAGIAGEKAGIITRAPDGSPDTVAVIGRQVPKVMEVLLAESVRADASVAREDSEFAVLRRQIAVGGQVLQLQGLGGVYSDIYLPLHGEHQAHNAVLALASVEAFFGAGAQRQLDGDAVRAGFAAVTSPGRLERMRSAPTVFIDAAHNPAGASALAQTLAHEFDFRFLVGVLSVLGDKDVDGILAALEPVFDSVVVTHNGSPRALDVEALALAAGERFGPDRVRTAENLRDAIDVATSLVDDAAADPDVAGDAFSRTGIVITGSVVTAGAARTLFGRDPQ</sequence>
<evidence type="ECO:0000250" key="1">
    <source>
        <dbReference type="UniProtKB" id="P08192"/>
    </source>
</evidence>
<evidence type="ECO:0000269" key="2">
    <source>
    </source>
</evidence>
<evidence type="ECO:0000269" key="3">
    <source>
    </source>
</evidence>
<evidence type="ECO:0000269" key="4">
    <source>
    </source>
</evidence>
<evidence type="ECO:0000269" key="5">
    <source>
    </source>
</evidence>
<evidence type="ECO:0000269" key="6">
    <source>
    </source>
</evidence>
<evidence type="ECO:0000269" key="7">
    <source>
    </source>
</evidence>
<evidence type="ECO:0000303" key="8">
    <source>
    </source>
</evidence>
<evidence type="ECO:0000305" key="9"/>
<evidence type="ECO:0000305" key="10">
    <source>
    </source>
</evidence>
<evidence type="ECO:0000305" key="11">
    <source>
    </source>
</evidence>
<evidence type="ECO:0000305" key="12">
    <source>
    </source>
</evidence>
<evidence type="ECO:0000312" key="13">
    <source>
        <dbReference type="EMBL" id="CCP45240.1"/>
    </source>
</evidence>
<evidence type="ECO:0007744" key="14">
    <source>
        <dbReference type="PDB" id="2VOR"/>
    </source>
</evidence>
<feature type="chain" id="PRO_0000439040" description="Dihydrofolate synthase/folylpolyglutamate synthase">
    <location>
        <begin position="1"/>
        <end position="487"/>
    </location>
</feature>
<feature type="binding site" evidence="1">
    <location>
        <begin position="44"/>
        <end position="46"/>
    </location>
    <ligand>
        <name>7,8-dihydropteroate</name>
        <dbReference type="ChEBI" id="CHEBI:17839"/>
    </ligand>
</feature>
<feature type="binding site" evidence="10 14">
    <location>
        <begin position="74"/>
        <end position="77"/>
    </location>
    <ligand>
        <name>ATP</name>
        <dbReference type="ChEBI" id="CHEBI:30616"/>
    </ligand>
</feature>
<feature type="binding site" evidence="10">
    <location>
        <position position="76"/>
    </location>
    <ligand>
        <name>Mg(2+)</name>
        <dbReference type="ChEBI" id="CHEBI:18420"/>
        <label>1</label>
    </ligand>
</feature>
<feature type="binding site" evidence="10">
    <location>
        <position position="98"/>
    </location>
    <ligand>
        <name>Mg(2+)</name>
        <dbReference type="ChEBI" id="CHEBI:18420"/>
        <label>1</label>
    </ligand>
</feature>
<feature type="binding site" evidence="1">
    <location>
        <begin position="150"/>
        <end position="153"/>
    </location>
    <ligand>
        <name>7,8-dihydropteroate</name>
        <dbReference type="ChEBI" id="CHEBI:17839"/>
    </ligand>
</feature>
<feature type="binding site" evidence="10">
    <location>
        <position position="174"/>
    </location>
    <ligand>
        <name>Mg(2+)</name>
        <dbReference type="ChEBI" id="CHEBI:18420"/>
        <label>1</label>
    </ligand>
</feature>
<feature type="binding site" evidence="1">
    <location>
        <begin position="181"/>
        <end position="183"/>
    </location>
    <ligand>
        <name>7,8-dihydropteroate</name>
        <dbReference type="ChEBI" id="CHEBI:17839"/>
    </ligand>
</feature>
<feature type="binding site" evidence="10">
    <location>
        <position position="201"/>
    </location>
    <ligand>
        <name>Mg(2+)</name>
        <dbReference type="ChEBI" id="CHEBI:18420"/>
        <label>2</label>
    </ligand>
</feature>
<feature type="binding site" evidence="10">
    <location>
        <position position="203"/>
    </location>
    <ligand>
        <name>Mg(2+)</name>
        <dbReference type="ChEBI" id="CHEBI:18420"/>
        <label>2</label>
    </ligand>
</feature>
<feature type="binding site" evidence="10 14">
    <location>
        <position position="301"/>
    </location>
    <ligand>
        <name>ATP</name>
        <dbReference type="ChEBI" id="CHEBI:30616"/>
    </ligand>
</feature>
<feature type="binding site" evidence="10 14">
    <location>
        <position position="338"/>
    </location>
    <ligand>
        <name>ATP</name>
        <dbReference type="ChEBI" id="CHEBI:30616"/>
    </ligand>
</feature>
<feature type="binding site" evidence="10 14">
    <location>
        <begin position="351"/>
        <end position="354"/>
    </location>
    <ligand>
        <name>ATP</name>
        <dbReference type="ChEBI" id="CHEBI:30616"/>
    </ligand>
</feature>
<feature type="binding site" evidence="10">
    <location>
        <position position="384"/>
    </location>
    <ligand>
        <name>Mg(2+)</name>
        <dbReference type="ChEBI" id="CHEBI:18420"/>
        <label>2</label>
    </ligand>
</feature>
<feature type="sequence variant" description="In a spontaneous PAS-resistant mutant strain; complementation with wild-type folC restores PAS susceptibility, confirmimg that this mutation confers high level resistance to PAS." evidence="6">
    <original>E</original>
    <variation>A</variation>
    <location>
        <position position="40"/>
    </location>
</feature>
<feature type="sequence variant" description="In clinical isolates: Q274 and 501063; PAS-resistant; complementation with wild-type folC restores PAS susceptibility." evidence="7">
    <original>E</original>
    <variation>G</variation>
    <location>
        <position position="40"/>
    </location>
</feature>
<feature type="sequence variant" description="In clinical isolate: Q36; PAS-resistant; complementation with wild-type folC restores PAS susceptibility." evidence="7">
    <original>I</original>
    <variation>A</variation>
    <location>
        <position position="43"/>
    </location>
</feature>
<feature type="sequence variant" description="In clinical isolates: Q449 and 1314; PAS-resistant; complementation with wild-type folC restores PAS susceptibility; 7-fold reduction in DHFS activity relative to wild-type; loss of the ability to glutaminate H2PtePAS." evidence="7">
    <original>I</original>
    <variation>T</variation>
    <location>
        <position position="43"/>
    </location>
</feature>
<feature type="sequence variant" description="In a spontaneous PAS-resistant mutant strain." evidence="7">
    <original>N</original>
    <variation>S</variation>
    <location>
        <position position="73"/>
    </location>
</feature>
<feature type="sequence variant" description="In a spontaneous PAS-resistant mutant strain; complementation with wild-type folC restores PAS susceptibility." evidence="7">
    <original>S</original>
    <variation>G</variation>
    <location>
        <position position="150"/>
    </location>
</feature>
<feature type="sequence variant" description="In a spontaneous PAS-resistant mutant strain; complementation with wild-type folC restores PAS susceptibility." evidence="7">
    <original>F</original>
    <variation>S</variation>
    <location>
        <position position="152"/>
    </location>
</feature>
<feature type="sequence variant" description="In a spontaneous PAS-resistant mutant strain; complementation with wild-type folC restores PAS susceptibility; 5-fold reduction in DHFS activity relative to wild-type; loss of the ability to glutaminate H2PtePAS." evidence="7">
    <original>E</original>
    <variation>A</variation>
    <location>
        <position position="153"/>
    </location>
</feature>
<feature type="sequence variant" description="In a spontaneous PAS-resistant mutant strain; complementation with wild-type folC restores PAS susceptibility." evidence="7">
    <original>E</original>
    <variation>G</variation>
    <location>
        <position position="153"/>
    </location>
</feature>
<accession>I6Y0R5</accession>